<accession>Q18CH7</accession>
<evidence type="ECO:0000255" key="1">
    <source>
        <dbReference type="HAMAP-Rule" id="MF_01341"/>
    </source>
</evidence>
<evidence type="ECO:0000256" key="2">
    <source>
        <dbReference type="SAM" id="MobiDB-lite"/>
    </source>
</evidence>
<evidence type="ECO:0000305" key="3"/>
<keyword id="KW-1185">Reference proteome</keyword>
<keyword id="KW-0687">Ribonucleoprotein</keyword>
<keyword id="KW-0689">Ribosomal protein</keyword>
<keyword id="KW-0694">RNA-binding</keyword>
<keyword id="KW-0699">rRNA-binding</keyword>
<dbReference type="EMBL" id="AM180355">
    <property type="protein sequence ID" value="CAJ66907.1"/>
    <property type="molecule type" value="Genomic_DNA"/>
</dbReference>
<dbReference type="RefSeq" id="WP_003421135.1">
    <property type="nucleotide sequence ID" value="NZ_JAUPES010000043.1"/>
</dbReference>
<dbReference type="RefSeq" id="YP_001086556.1">
    <property type="nucleotide sequence ID" value="NC_009089.1"/>
</dbReference>
<dbReference type="SMR" id="Q18CH7"/>
<dbReference type="STRING" id="272563.CD630_00890"/>
<dbReference type="EnsemblBacteria" id="CAJ66907">
    <property type="protein sequence ID" value="CAJ66907"/>
    <property type="gene ID" value="CD630_00890"/>
</dbReference>
<dbReference type="GeneID" id="66352590"/>
<dbReference type="KEGG" id="cdf:CD630_00890"/>
<dbReference type="KEGG" id="pdc:CDIF630_00158"/>
<dbReference type="PATRIC" id="fig|272563.120.peg.98"/>
<dbReference type="eggNOG" id="COG0200">
    <property type="taxonomic scope" value="Bacteria"/>
</dbReference>
<dbReference type="OrthoDB" id="9810293at2"/>
<dbReference type="PhylomeDB" id="Q18CH7"/>
<dbReference type="BioCyc" id="PDIF272563:G12WB-146-MONOMER"/>
<dbReference type="Proteomes" id="UP000001978">
    <property type="component" value="Chromosome"/>
</dbReference>
<dbReference type="GO" id="GO:0022625">
    <property type="term" value="C:cytosolic large ribosomal subunit"/>
    <property type="evidence" value="ECO:0007669"/>
    <property type="project" value="TreeGrafter"/>
</dbReference>
<dbReference type="GO" id="GO:0019843">
    <property type="term" value="F:rRNA binding"/>
    <property type="evidence" value="ECO:0007669"/>
    <property type="project" value="UniProtKB-UniRule"/>
</dbReference>
<dbReference type="GO" id="GO:0003735">
    <property type="term" value="F:structural constituent of ribosome"/>
    <property type="evidence" value="ECO:0007669"/>
    <property type="project" value="InterPro"/>
</dbReference>
<dbReference type="GO" id="GO:0006412">
    <property type="term" value="P:translation"/>
    <property type="evidence" value="ECO:0007669"/>
    <property type="project" value="UniProtKB-UniRule"/>
</dbReference>
<dbReference type="Gene3D" id="3.100.10.10">
    <property type="match status" value="1"/>
</dbReference>
<dbReference type="HAMAP" id="MF_01341">
    <property type="entry name" value="Ribosomal_uL15"/>
    <property type="match status" value="1"/>
</dbReference>
<dbReference type="InterPro" id="IPR030878">
    <property type="entry name" value="Ribosomal_uL15"/>
</dbReference>
<dbReference type="InterPro" id="IPR021131">
    <property type="entry name" value="Ribosomal_uL15/eL18"/>
</dbReference>
<dbReference type="InterPro" id="IPR036227">
    <property type="entry name" value="Ribosomal_uL15/eL18_sf"/>
</dbReference>
<dbReference type="InterPro" id="IPR005749">
    <property type="entry name" value="Ribosomal_uL15_bac-type"/>
</dbReference>
<dbReference type="InterPro" id="IPR001196">
    <property type="entry name" value="Ribosomal_uL15_CS"/>
</dbReference>
<dbReference type="NCBIfam" id="TIGR01071">
    <property type="entry name" value="rplO_bact"/>
    <property type="match status" value="1"/>
</dbReference>
<dbReference type="PANTHER" id="PTHR12934">
    <property type="entry name" value="50S RIBOSOMAL PROTEIN L15"/>
    <property type="match status" value="1"/>
</dbReference>
<dbReference type="PANTHER" id="PTHR12934:SF11">
    <property type="entry name" value="LARGE RIBOSOMAL SUBUNIT PROTEIN UL15M"/>
    <property type="match status" value="1"/>
</dbReference>
<dbReference type="Pfam" id="PF00828">
    <property type="entry name" value="Ribosomal_L27A"/>
    <property type="match status" value="1"/>
</dbReference>
<dbReference type="SUPFAM" id="SSF52080">
    <property type="entry name" value="Ribosomal proteins L15p and L18e"/>
    <property type="match status" value="1"/>
</dbReference>
<dbReference type="PROSITE" id="PS00475">
    <property type="entry name" value="RIBOSOMAL_L15"/>
    <property type="match status" value="1"/>
</dbReference>
<organism>
    <name type="scientific">Clostridioides difficile (strain 630)</name>
    <name type="common">Peptoclostridium difficile</name>
    <dbReference type="NCBI Taxonomy" id="272563"/>
    <lineage>
        <taxon>Bacteria</taxon>
        <taxon>Bacillati</taxon>
        <taxon>Bacillota</taxon>
        <taxon>Clostridia</taxon>
        <taxon>Peptostreptococcales</taxon>
        <taxon>Peptostreptococcaceae</taxon>
        <taxon>Clostridioides</taxon>
    </lineage>
</organism>
<feature type="chain" id="PRO_1000054451" description="Large ribosomal subunit protein uL15">
    <location>
        <begin position="1"/>
        <end position="147"/>
    </location>
</feature>
<feature type="region of interest" description="Disordered" evidence="2">
    <location>
        <begin position="1"/>
        <end position="47"/>
    </location>
</feature>
<feature type="compositionally biased region" description="Gly residues" evidence="2">
    <location>
        <begin position="23"/>
        <end position="35"/>
    </location>
</feature>
<protein>
    <recommendedName>
        <fullName evidence="1">Large ribosomal subunit protein uL15</fullName>
    </recommendedName>
    <alternativeName>
        <fullName evidence="3">50S ribosomal protein L15</fullName>
    </alternativeName>
</protein>
<proteinExistence type="inferred from homology"/>
<reference key="1">
    <citation type="journal article" date="2006" name="Nat. Genet.">
        <title>The multidrug-resistant human pathogen Clostridium difficile has a highly mobile, mosaic genome.</title>
        <authorList>
            <person name="Sebaihia M."/>
            <person name="Wren B.W."/>
            <person name="Mullany P."/>
            <person name="Fairweather N.F."/>
            <person name="Minton N."/>
            <person name="Stabler R."/>
            <person name="Thomson N.R."/>
            <person name="Roberts A.P."/>
            <person name="Cerdeno-Tarraga A.M."/>
            <person name="Wang H."/>
            <person name="Holden M.T.G."/>
            <person name="Wright A."/>
            <person name="Churcher C."/>
            <person name="Quail M.A."/>
            <person name="Baker S."/>
            <person name="Bason N."/>
            <person name="Brooks K."/>
            <person name="Chillingworth T."/>
            <person name="Cronin A."/>
            <person name="Davis P."/>
            <person name="Dowd L."/>
            <person name="Fraser A."/>
            <person name="Feltwell T."/>
            <person name="Hance Z."/>
            <person name="Holroyd S."/>
            <person name="Jagels K."/>
            <person name="Moule S."/>
            <person name="Mungall K."/>
            <person name="Price C."/>
            <person name="Rabbinowitsch E."/>
            <person name="Sharp S."/>
            <person name="Simmonds M."/>
            <person name="Stevens K."/>
            <person name="Unwin L."/>
            <person name="Whithead S."/>
            <person name="Dupuy B."/>
            <person name="Dougan G."/>
            <person name="Barrell B."/>
            <person name="Parkhill J."/>
        </authorList>
    </citation>
    <scope>NUCLEOTIDE SEQUENCE [LARGE SCALE GENOMIC DNA]</scope>
    <source>
        <strain>630</strain>
    </source>
</reference>
<comment type="function">
    <text evidence="1">Binds to the 23S rRNA.</text>
</comment>
<comment type="subunit">
    <text evidence="1">Part of the 50S ribosomal subunit.</text>
</comment>
<comment type="similarity">
    <text evidence="1">Belongs to the universal ribosomal protein uL15 family.</text>
</comment>
<gene>
    <name evidence="1" type="primary">rplO</name>
    <name type="ordered locus">CD630_00890</name>
</gene>
<name>RL15_CLOD6</name>
<sequence>MKLHELKPAEGAVRAKRRLGRGTATGQGKTAGRGQKGQWSRSGGGVRVGFEGGQMPLARRLPKRGFNNIFKKVYTEVNVEVLNRFENGTEITAELLKSTKTISKIGKDGIKILGEGNLEKALTVKAAKFTASAQEKIEKAGGKAELV</sequence>